<gene>
    <name evidence="7" type="primary">Glis3</name>
</gene>
<protein>
    <recommendedName>
        <fullName>Zinc finger protein GLIS3</fullName>
    </recommendedName>
    <alternativeName>
        <fullName>GLI-similar 3</fullName>
    </alternativeName>
</protein>
<keyword id="KW-0010">Activator</keyword>
<keyword id="KW-0025">Alternative splicing</keyword>
<keyword id="KW-0238">DNA-binding</keyword>
<keyword id="KW-0479">Metal-binding</keyword>
<keyword id="KW-0539">Nucleus</keyword>
<keyword id="KW-1185">Reference proteome</keyword>
<keyword id="KW-0677">Repeat</keyword>
<keyword id="KW-0678">Repressor</keyword>
<keyword id="KW-0804">Transcription</keyword>
<keyword id="KW-0805">Transcription regulation</keyword>
<keyword id="KW-0862">Zinc</keyword>
<keyword id="KW-0863">Zinc-finger</keyword>
<accession>Q6XP49</accession>
<accession>Q8BI60</accession>
<comment type="function">
    <text evidence="4">Acts both as a repressor and activator of transcription. Binds to the consensus sequence 5'-GACCACCCAC-3'.</text>
</comment>
<comment type="subcellular location">
    <subcellularLocation>
        <location evidence="4">Nucleus</location>
    </subcellularLocation>
</comment>
<comment type="alternative products">
    <event type="alternative splicing"/>
    <isoform>
        <id>Q6XP49-1</id>
        <name>1</name>
        <sequence type="displayed"/>
    </isoform>
    <isoform>
        <id>Q6XP49-2</id>
        <name>2</name>
        <sequence type="described" ref="VSP_012281 VSP_012282 VSP_012283"/>
    </isoform>
</comment>
<comment type="tissue specificity">
    <text evidence="4">In the embryo, expressed at high levels in the kidney and testis. In the adult, expressed at high levels in the kidney and uterus and at lower levels in the brain, lung, skeletal muscle and pancreas.</text>
</comment>
<comment type="developmental stage">
    <text evidence="4">In the embryo, expression is detected between days 6.5 and 14.5, particularly during neurulation. At embryonic days 11.5 to 12.5, expression is high in the interdigital regions destined to undergo apoptosis.</text>
</comment>
<comment type="similarity">
    <text evidence="6">Belongs to the GLI C2H2-type zinc-finger protein family.</text>
</comment>
<comment type="sequence caution" evidence="6">
    <conflict type="erroneous initiation">
        <sequence resource="EMBL-CDS" id="AAP59883"/>
    </conflict>
</comment>
<sequence length="780" mass="83882">MMVQRLGPISPPASQVSTACKQISPSLPRAVNAANLNRPPSDTRSVILQESLVSTTLSLTESQSALSVKQEWSQSYRAFPSLSSSHSSQNGTDLGDLLSLPPGTPVSGNSVSNSLPPYLFGMENSHSPYPSPRHSATRAHSTRSKKRALSLSPLSDGIGIDFNTIIRTSPTSLVAYINGPRASPANLSPQSEVYGHFLGVRGSCIPQSCAVASGQKGILVASGGHTLPGYGEDGTLEYERMQQLEHGGLQPGPVNNMVLQPGLPGQDGQTANMLKTERLEEFPASALDLPSALPLPLPPPQGPPPPYHAHPHLHHPELLPHTQSLSLAQTGLEEDGEMEDSGGKHCCRWIDCSALYDQQEELVRHIEKVHIDQRKGEDFTCFWTGCPRRYKPFNARYKLLIHMRVHSGEKPNKCTFEGCKKAFSRLENLKIHLRSHTGEKPYLCQHPGCQKAFSNSSDRAKHQRTHLDTKPYACQIPGCTKRYTDPSSLRKHVKAHSSREQQARKKLRSSTELHPDLLTDCLAVQPLQPATSPGDAADHTVGHSPGPGPGPGPGAELYSAPIFASNHSTRSGTAAGAGPPPHPVSHPSPGHNVQGSPHNPSSQLPPLTAVDAGAERFAPPTPSPHHISPGRVPAPPSLLQRAQAPHSQQPPGSLLKPYQPETNSSFQPNGIHVHGFYGQLQTFCPPHYPDSQRTVPPSGSCSMVPSFEDCLVPTSMGQAGFDVFHRAFSTHSGITVYDLPSASSSLFGESLRSGPEDPTFLQLSAVDRCPSQLSSVYTEG</sequence>
<evidence type="ECO:0000255" key="1"/>
<evidence type="ECO:0000255" key="2">
    <source>
        <dbReference type="PROSITE-ProRule" id="PRU00042"/>
    </source>
</evidence>
<evidence type="ECO:0000256" key="3">
    <source>
        <dbReference type="SAM" id="MobiDB-lite"/>
    </source>
</evidence>
<evidence type="ECO:0000269" key="4">
    <source>
    </source>
</evidence>
<evidence type="ECO:0000303" key="5">
    <source>
    </source>
</evidence>
<evidence type="ECO:0000305" key="6"/>
<evidence type="ECO:0000312" key="7">
    <source>
        <dbReference type="EMBL" id="AAP59883.1"/>
    </source>
</evidence>
<proteinExistence type="evidence at protein level"/>
<organism>
    <name type="scientific">Mus musculus</name>
    <name type="common">Mouse</name>
    <dbReference type="NCBI Taxonomy" id="10090"/>
    <lineage>
        <taxon>Eukaryota</taxon>
        <taxon>Metazoa</taxon>
        <taxon>Chordata</taxon>
        <taxon>Craniata</taxon>
        <taxon>Vertebrata</taxon>
        <taxon>Euteleostomi</taxon>
        <taxon>Mammalia</taxon>
        <taxon>Eutheria</taxon>
        <taxon>Euarchontoglires</taxon>
        <taxon>Glires</taxon>
        <taxon>Rodentia</taxon>
        <taxon>Myomorpha</taxon>
        <taxon>Muroidea</taxon>
        <taxon>Muridae</taxon>
        <taxon>Murinae</taxon>
        <taxon>Mus</taxon>
        <taxon>Mus</taxon>
    </lineage>
</organism>
<name>GLIS3_MOUSE</name>
<dbReference type="EMBL" id="AY220846">
    <property type="protein sequence ID" value="AAP59883.1"/>
    <property type="status" value="ALT_INIT"/>
    <property type="molecule type" value="mRNA"/>
</dbReference>
<dbReference type="EMBL" id="AK054020">
    <property type="protein sequence ID" value="BAC35623.1"/>
    <property type="molecule type" value="mRNA"/>
</dbReference>
<dbReference type="RefSeq" id="XP_006527048.1">
    <molecule id="Q6XP49-1"/>
    <property type="nucleotide sequence ID" value="XM_006526985.5"/>
</dbReference>
<dbReference type="RefSeq" id="XP_036017455.1">
    <molecule id="Q6XP49-2"/>
    <property type="nucleotide sequence ID" value="XM_036161562.1"/>
</dbReference>
<dbReference type="SMR" id="Q6XP49"/>
<dbReference type="BioGRID" id="230466">
    <property type="interactions" value="1"/>
</dbReference>
<dbReference type="CORUM" id="Q6XP49"/>
<dbReference type="FunCoup" id="Q6XP49">
    <property type="interactions" value="1250"/>
</dbReference>
<dbReference type="STRING" id="10090.ENSMUSP00000124635"/>
<dbReference type="GlyGen" id="Q6XP49">
    <property type="glycosylation" value="1 site"/>
</dbReference>
<dbReference type="iPTMnet" id="Q6XP49"/>
<dbReference type="PhosphoSitePlus" id="Q6XP49"/>
<dbReference type="PaxDb" id="10090-ENSMUSP00000124635"/>
<dbReference type="ProteomicsDB" id="270992">
    <molecule id="Q6XP49-1"/>
</dbReference>
<dbReference type="ProteomicsDB" id="270993">
    <molecule id="Q6XP49-2"/>
</dbReference>
<dbReference type="Antibodypedia" id="23977">
    <property type="antibodies" value="102 antibodies from 22 providers"/>
</dbReference>
<dbReference type="DNASU" id="226075"/>
<dbReference type="Ensembl" id="ENSMUST00000112612.9">
    <molecule id="Q6XP49-2"/>
    <property type="protein sequence ID" value="ENSMUSP00000108231.3"/>
    <property type="gene ID" value="ENSMUSG00000052942.14"/>
</dbReference>
<dbReference type="GeneID" id="226075"/>
<dbReference type="UCSC" id="uc008hch.2">
    <molecule id="Q6XP49-1"/>
    <property type="organism name" value="mouse"/>
</dbReference>
<dbReference type="AGR" id="MGI:2444289"/>
<dbReference type="CTD" id="169792"/>
<dbReference type="MGI" id="MGI:2444289">
    <property type="gene designation" value="Glis3"/>
</dbReference>
<dbReference type="VEuPathDB" id="HostDB:ENSMUSG00000052942"/>
<dbReference type="eggNOG" id="KOG1721">
    <property type="taxonomic scope" value="Eukaryota"/>
</dbReference>
<dbReference type="GeneTree" id="ENSGT00940000156896"/>
<dbReference type="HOGENOM" id="CLU_481988_0_0_1"/>
<dbReference type="InParanoid" id="Q6XP49"/>
<dbReference type="OrthoDB" id="3437960at2759"/>
<dbReference type="BioGRID-ORCS" id="226075">
    <property type="hits" value="6 hits in 62 CRISPR screens"/>
</dbReference>
<dbReference type="ChiTaRS" id="Glis3">
    <property type="organism name" value="mouse"/>
</dbReference>
<dbReference type="PRO" id="PR:Q6XP49"/>
<dbReference type="Proteomes" id="UP000000589">
    <property type="component" value="Chromosome 19"/>
</dbReference>
<dbReference type="RNAct" id="Q6XP49">
    <property type="molecule type" value="protein"/>
</dbReference>
<dbReference type="Bgee" id="ENSMUSG00000052942">
    <property type="expression patterns" value="Expressed in animal zygote and 171 other cell types or tissues"/>
</dbReference>
<dbReference type="ExpressionAtlas" id="Q6XP49">
    <property type="expression patterns" value="baseline and differential"/>
</dbReference>
<dbReference type="GO" id="GO:0005634">
    <property type="term" value="C:nucleus"/>
    <property type="evidence" value="ECO:0000314"/>
    <property type="project" value="UniProtKB"/>
</dbReference>
<dbReference type="GO" id="GO:0003677">
    <property type="term" value="F:DNA binding"/>
    <property type="evidence" value="ECO:0000314"/>
    <property type="project" value="MGI"/>
</dbReference>
<dbReference type="GO" id="GO:0001228">
    <property type="term" value="F:DNA-binding transcription activator activity, RNA polymerase II-specific"/>
    <property type="evidence" value="ECO:0000314"/>
    <property type="project" value="BHF-UCL"/>
</dbReference>
<dbReference type="GO" id="GO:0003700">
    <property type="term" value="F:DNA-binding transcription factor activity"/>
    <property type="evidence" value="ECO:0000314"/>
    <property type="project" value="MGI"/>
</dbReference>
<dbReference type="GO" id="GO:0001227">
    <property type="term" value="F:DNA-binding transcription repressor activity, RNA polymerase II-specific"/>
    <property type="evidence" value="ECO:0000314"/>
    <property type="project" value="BHF-UCL"/>
</dbReference>
<dbReference type="GO" id="GO:0000978">
    <property type="term" value="F:RNA polymerase II cis-regulatory region sequence-specific DNA binding"/>
    <property type="evidence" value="ECO:0000314"/>
    <property type="project" value="BHF-UCL"/>
</dbReference>
<dbReference type="GO" id="GO:0000977">
    <property type="term" value="F:RNA polymerase II transcription regulatory region sequence-specific DNA binding"/>
    <property type="evidence" value="ECO:0000314"/>
    <property type="project" value="MGI"/>
</dbReference>
<dbReference type="GO" id="GO:0008270">
    <property type="term" value="F:zinc ion binding"/>
    <property type="evidence" value="ECO:0007669"/>
    <property type="project" value="UniProtKB-KW"/>
</dbReference>
<dbReference type="GO" id="GO:0000122">
    <property type="term" value="P:negative regulation of transcription by RNA polymerase II"/>
    <property type="evidence" value="ECO:0000314"/>
    <property type="project" value="UniProtKB"/>
</dbReference>
<dbReference type="GO" id="GO:0045944">
    <property type="term" value="P:positive regulation of transcription by RNA polymerase II"/>
    <property type="evidence" value="ECO:0000314"/>
    <property type="project" value="UniProtKB"/>
</dbReference>
<dbReference type="GO" id="GO:0006366">
    <property type="term" value="P:transcription by RNA polymerase II"/>
    <property type="evidence" value="ECO:0000314"/>
    <property type="project" value="UniProtKB"/>
</dbReference>
<dbReference type="FunFam" id="3.30.160.60:FF:000019">
    <property type="entry name" value="GLI family zinc finger 3"/>
    <property type="match status" value="1"/>
</dbReference>
<dbReference type="FunFam" id="3.30.160.60:FF:000031">
    <property type="entry name" value="GLI family zinc finger 3"/>
    <property type="match status" value="1"/>
</dbReference>
<dbReference type="FunFam" id="3.30.160.60:FF:000036">
    <property type="entry name" value="GLI family zinc finger 3"/>
    <property type="match status" value="1"/>
</dbReference>
<dbReference type="FunFam" id="3.30.160.60:FF:000048">
    <property type="entry name" value="GLI family zinc finger 3"/>
    <property type="match status" value="1"/>
</dbReference>
<dbReference type="FunFam" id="3.30.160.60:FF:000453">
    <property type="entry name" value="GLIS family zinc finger 3"/>
    <property type="match status" value="1"/>
</dbReference>
<dbReference type="Gene3D" id="3.30.160.60">
    <property type="entry name" value="Classic Zinc Finger"/>
    <property type="match status" value="5"/>
</dbReference>
<dbReference type="InterPro" id="IPR043359">
    <property type="entry name" value="GLI-like"/>
</dbReference>
<dbReference type="InterPro" id="IPR056436">
    <property type="entry name" value="Znf-C2H2_ZIC1-5/GLI1-3-like"/>
</dbReference>
<dbReference type="InterPro" id="IPR036236">
    <property type="entry name" value="Znf_C2H2_sf"/>
</dbReference>
<dbReference type="InterPro" id="IPR013087">
    <property type="entry name" value="Znf_C2H2_type"/>
</dbReference>
<dbReference type="PANTHER" id="PTHR45718">
    <property type="entry name" value="TRANSCRIPTIONAL ACTIVATOR CUBITUS INTERRUPTUS"/>
    <property type="match status" value="1"/>
</dbReference>
<dbReference type="PANTHER" id="PTHR45718:SF1">
    <property type="entry name" value="ZINC FINGER PROTEIN GLIS3"/>
    <property type="match status" value="1"/>
</dbReference>
<dbReference type="Pfam" id="PF00096">
    <property type="entry name" value="zf-C2H2"/>
    <property type="match status" value="3"/>
</dbReference>
<dbReference type="Pfam" id="PF23561">
    <property type="entry name" value="zf-C2H2_15"/>
    <property type="match status" value="1"/>
</dbReference>
<dbReference type="SMART" id="SM00355">
    <property type="entry name" value="ZnF_C2H2"/>
    <property type="match status" value="5"/>
</dbReference>
<dbReference type="SUPFAM" id="SSF57667">
    <property type="entry name" value="beta-beta-alpha zinc fingers"/>
    <property type="match status" value="3"/>
</dbReference>
<dbReference type="PROSITE" id="PS00028">
    <property type="entry name" value="ZINC_FINGER_C2H2_1"/>
    <property type="match status" value="4"/>
</dbReference>
<dbReference type="PROSITE" id="PS50157">
    <property type="entry name" value="ZINC_FINGER_C2H2_2"/>
    <property type="match status" value="5"/>
</dbReference>
<reference evidence="6 7" key="1">
    <citation type="journal article" date="2003" name="Nucleic Acids Res.">
        <title>GLIS3, a novel member of the GLIS subfamily of Kruppel-like zinc finger proteins with repressor and activation functions.</title>
        <authorList>
            <person name="Kim Y.-S."/>
            <person name="Nakanishi G."/>
            <person name="Lewandoski M."/>
            <person name="Jetten A.M."/>
        </authorList>
    </citation>
    <scope>NUCLEOTIDE SEQUENCE [MRNA] (ISOFORM 1)</scope>
    <scope>FUNCTION</scope>
    <scope>SUBCELLULAR LOCATION</scope>
    <scope>TISSUE SPECIFICITY</scope>
    <scope>DEVELOPMENTAL STAGE</scope>
    <source>
        <strain evidence="7">Swiss Webster</strain>
        <tissue evidence="4">Kidney</tissue>
    </source>
</reference>
<reference key="2">
    <citation type="journal article" date="2005" name="Science">
        <title>The transcriptional landscape of the mammalian genome.</title>
        <authorList>
            <person name="Carninci P."/>
            <person name="Kasukawa T."/>
            <person name="Katayama S."/>
            <person name="Gough J."/>
            <person name="Frith M.C."/>
            <person name="Maeda N."/>
            <person name="Oyama R."/>
            <person name="Ravasi T."/>
            <person name="Lenhard B."/>
            <person name="Wells C."/>
            <person name="Kodzius R."/>
            <person name="Shimokawa K."/>
            <person name="Bajic V.B."/>
            <person name="Brenner S.E."/>
            <person name="Batalov S."/>
            <person name="Forrest A.R."/>
            <person name="Zavolan M."/>
            <person name="Davis M.J."/>
            <person name="Wilming L.G."/>
            <person name="Aidinis V."/>
            <person name="Allen J.E."/>
            <person name="Ambesi-Impiombato A."/>
            <person name="Apweiler R."/>
            <person name="Aturaliya R.N."/>
            <person name="Bailey T.L."/>
            <person name="Bansal M."/>
            <person name="Baxter L."/>
            <person name="Beisel K.W."/>
            <person name="Bersano T."/>
            <person name="Bono H."/>
            <person name="Chalk A.M."/>
            <person name="Chiu K.P."/>
            <person name="Choudhary V."/>
            <person name="Christoffels A."/>
            <person name="Clutterbuck D.R."/>
            <person name="Crowe M.L."/>
            <person name="Dalla E."/>
            <person name="Dalrymple B.P."/>
            <person name="de Bono B."/>
            <person name="Della Gatta G."/>
            <person name="di Bernardo D."/>
            <person name="Down T."/>
            <person name="Engstrom P."/>
            <person name="Fagiolini M."/>
            <person name="Faulkner G."/>
            <person name="Fletcher C.F."/>
            <person name="Fukushima T."/>
            <person name="Furuno M."/>
            <person name="Futaki S."/>
            <person name="Gariboldi M."/>
            <person name="Georgii-Hemming P."/>
            <person name="Gingeras T.R."/>
            <person name="Gojobori T."/>
            <person name="Green R.E."/>
            <person name="Gustincich S."/>
            <person name="Harbers M."/>
            <person name="Hayashi Y."/>
            <person name="Hensch T.K."/>
            <person name="Hirokawa N."/>
            <person name="Hill D."/>
            <person name="Huminiecki L."/>
            <person name="Iacono M."/>
            <person name="Ikeo K."/>
            <person name="Iwama A."/>
            <person name="Ishikawa T."/>
            <person name="Jakt M."/>
            <person name="Kanapin A."/>
            <person name="Katoh M."/>
            <person name="Kawasawa Y."/>
            <person name="Kelso J."/>
            <person name="Kitamura H."/>
            <person name="Kitano H."/>
            <person name="Kollias G."/>
            <person name="Krishnan S.P."/>
            <person name="Kruger A."/>
            <person name="Kummerfeld S.K."/>
            <person name="Kurochkin I.V."/>
            <person name="Lareau L.F."/>
            <person name="Lazarevic D."/>
            <person name="Lipovich L."/>
            <person name="Liu J."/>
            <person name="Liuni S."/>
            <person name="McWilliam S."/>
            <person name="Madan Babu M."/>
            <person name="Madera M."/>
            <person name="Marchionni L."/>
            <person name="Matsuda H."/>
            <person name="Matsuzawa S."/>
            <person name="Miki H."/>
            <person name="Mignone F."/>
            <person name="Miyake S."/>
            <person name="Morris K."/>
            <person name="Mottagui-Tabar S."/>
            <person name="Mulder N."/>
            <person name="Nakano N."/>
            <person name="Nakauchi H."/>
            <person name="Ng P."/>
            <person name="Nilsson R."/>
            <person name="Nishiguchi S."/>
            <person name="Nishikawa S."/>
            <person name="Nori F."/>
            <person name="Ohara O."/>
            <person name="Okazaki Y."/>
            <person name="Orlando V."/>
            <person name="Pang K.C."/>
            <person name="Pavan W.J."/>
            <person name="Pavesi G."/>
            <person name="Pesole G."/>
            <person name="Petrovsky N."/>
            <person name="Piazza S."/>
            <person name="Reed J."/>
            <person name="Reid J.F."/>
            <person name="Ring B.Z."/>
            <person name="Ringwald M."/>
            <person name="Rost B."/>
            <person name="Ruan Y."/>
            <person name="Salzberg S.L."/>
            <person name="Sandelin A."/>
            <person name="Schneider C."/>
            <person name="Schoenbach C."/>
            <person name="Sekiguchi K."/>
            <person name="Semple C.A."/>
            <person name="Seno S."/>
            <person name="Sessa L."/>
            <person name="Sheng Y."/>
            <person name="Shibata Y."/>
            <person name="Shimada H."/>
            <person name="Shimada K."/>
            <person name="Silva D."/>
            <person name="Sinclair B."/>
            <person name="Sperling S."/>
            <person name="Stupka E."/>
            <person name="Sugiura K."/>
            <person name="Sultana R."/>
            <person name="Takenaka Y."/>
            <person name="Taki K."/>
            <person name="Tammoja K."/>
            <person name="Tan S.L."/>
            <person name="Tang S."/>
            <person name="Taylor M.S."/>
            <person name="Tegner J."/>
            <person name="Teichmann S.A."/>
            <person name="Ueda H.R."/>
            <person name="van Nimwegen E."/>
            <person name="Verardo R."/>
            <person name="Wei C.L."/>
            <person name="Yagi K."/>
            <person name="Yamanishi H."/>
            <person name="Zabarovsky E."/>
            <person name="Zhu S."/>
            <person name="Zimmer A."/>
            <person name="Hide W."/>
            <person name="Bult C."/>
            <person name="Grimmond S.M."/>
            <person name="Teasdale R.D."/>
            <person name="Liu E.T."/>
            <person name="Brusic V."/>
            <person name="Quackenbush J."/>
            <person name="Wahlestedt C."/>
            <person name="Mattick J.S."/>
            <person name="Hume D.A."/>
            <person name="Kai C."/>
            <person name="Sasaki D."/>
            <person name="Tomaru Y."/>
            <person name="Fukuda S."/>
            <person name="Kanamori-Katayama M."/>
            <person name="Suzuki M."/>
            <person name="Aoki J."/>
            <person name="Arakawa T."/>
            <person name="Iida J."/>
            <person name="Imamura K."/>
            <person name="Itoh M."/>
            <person name="Kato T."/>
            <person name="Kawaji H."/>
            <person name="Kawagashira N."/>
            <person name="Kawashima T."/>
            <person name="Kojima M."/>
            <person name="Kondo S."/>
            <person name="Konno H."/>
            <person name="Nakano K."/>
            <person name="Ninomiya N."/>
            <person name="Nishio T."/>
            <person name="Okada M."/>
            <person name="Plessy C."/>
            <person name="Shibata K."/>
            <person name="Shiraki T."/>
            <person name="Suzuki S."/>
            <person name="Tagami M."/>
            <person name="Waki K."/>
            <person name="Watahiki A."/>
            <person name="Okamura-Oho Y."/>
            <person name="Suzuki H."/>
            <person name="Kawai J."/>
            <person name="Hayashizaki Y."/>
        </authorList>
    </citation>
    <scope>NUCLEOTIDE SEQUENCE [LARGE SCALE MRNA] (ISOFORM 2)</scope>
    <source>
        <strain>C57BL/6J</strain>
        <tissue>Oviduct</tissue>
    </source>
</reference>
<reference key="3">
    <citation type="journal article" date="2010" name="Cell">
        <title>A tissue-specific atlas of mouse protein phosphorylation and expression.</title>
        <authorList>
            <person name="Huttlin E.L."/>
            <person name="Jedrychowski M.P."/>
            <person name="Elias J.E."/>
            <person name="Goswami T."/>
            <person name="Rad R."/>
            <person name="Beausoleil S.A."/>
            <person name="Villen J."/>
            <person name="Haas W."/>
            <person name="Sowa M.E."/>
            <person name="Gygi S.P."/>
        </authorList>
    </citation>
    <scope>IDENTIFICATION BY MASS SPECTROMETRY [LARGE SCALE ANALYSIS]</scope>
    <source>
        <tissue>Kidney</tissue>
    </source>
</reference>
<feature type="chain" id="PRO_0000047212" description="Zinc finger protein GLIS3">
    <location>
        <begin position="1"/>
        <end position="780"/>
    </location>
</feature>
<feature type="zinc finger region" description="C2H2-type 1" evidence="2">
    <location>
        <begin position="345"/>
        <end position="370"/>
    </location>
</feature>
<feature type="zinc finger region" description="C2H2-type 2; atypical" evidence="2">
    <location>
        <begin position="379"/>
        <end position="406"/>
    </location>
</feature>
<feature type="zinc finger region" description="C2H2-type 3" evidence="2">
    <location>
        <begin position="412"/>
        <end position="436"/>
    </location>
</feature>
<feature type="zinc finger region" description="C2H2-type 4" evidence="2">
    <location>
        <begin position="442"/>
        <end position="466"/>
    </location>
</feature>
<feature type="zinc finger region" description="C2H2-type 5" evidence="2">
    <location>
        <begin position="472"/>
        <end position="496"/>
    </location>
</feature>
<feature type="region of interest" description="Disordered" evidence="3">
    <location>
        <begin position="80"/>
        <end position="148"/>
    </location>
</feature>
<feature type="region of interest" description="Disordered" evidence="3">
    <location>
        <begin position="290"/>
        <end position="315"/>
    </location>
</feature>
<feature type="region of interest" description="Disordered" evidence="3">
    <location>
        <begin position="485"/>
        <end position="512"/>
    </location>
</feature>
<feature type="region of interest" description="Disordered" evidence="3">
    <location>
        <begin position="527"/>
        <end position="670"/>
    </location>
</feature>
<feature type="short sequence motif" description="Bipartite nuclear localization signal" evidence="1">
    <location>
        <begin position="490"/>
        <end position="506"/>
    </location>
</feature>
<feature type="compositionally biased region" description="Polar residues" evidence="3">
    <location>
        <begin position="80"/>
        <end position="92"/>
    </location>
</feature>
<feature type="compositionally biased region" description="Polar residues" evidence="3">
    <location>
        <begin position="106"/>
        <end position="115"/>
    </location>
</feature>
<feature type="compositionally biased region" description="Basic residues" evidence="3">
    <location>
        <begin position="135"/>
        <end position="148"/>
    </location>
</feature>
<feature type="compositionally biased region" description="Pro residues" evidence="3">
    <location>
        <begin position="293"/>
        <end position="308"/>
    </location>
</feature>
<feature type="compositionally biased region" description="Basic and acidic residues" evidence="3">
    <location>
        <begin position="497"/>
        <end position="512"/>
    </location>
</feature>
<feature type="compositionally biased region" description="Low complexity" evidence="3">
    <location>
        <begin position="567"/>
        <end position="577"/>
    </location>
</feature>
<feature type="compositionally biased region" description="Polar residues" evidence="3">
    <location>
        <begin position="593"/>
        <end position="605"/>
    </location>
</feature>
<feature type="splice variant" id="VSP_012281" description="In isoform 2." evidence="5">
    <original>M</original>
    <variation>MNGRSCGMNLHRTSRTPQGPGLLGGQHIPPIRAHAGTPCSSSCASTPSPSIGSLANSLHLKMSSGAGMAPQSNMAASPIHLPALSPRRQLLANGKPQFQVTPAGVMAAPHTIKPKQQEFGDPFSPNPEKGALGFGPQCKSIGKGSCNNLVVTSSPM</variation>
    <location>
        <position position="1"/>
    </location>
</feature>
<feature type="splice variant" id="VSP_012282" description="In isoform 2." evidence="5">
    <original>RSSTELHPD</original>
    <variation>TNICASSHW</variation>
    <location>
        <begin position="508"/>
        <end position="516"/>
    </location>
</feature>
<feature type="splice variant" id="VSP_012283" description="In isoform 2." evidence="5">
    <location>
        <begin position="517"/>
        <end position="780"/>
    </location>
</feature>
<feature type="sequence conflict" description="In Ref. 2; BAC35623." evidence="6" ref="2">
    <original>L</original>
    <variation>P</variation>
    <location>
        <position position="274"/>
    </location>
</feature>
<feature type="sequence conflict" description="In Ref. 2; BAC35623." evidence="6" ref="2">
    <original>L</original>
    <variation>I</variation>
    <location>
        <position position="295"/>
    </location>
</feature>